<keyword id="KW-0997">Cell inner membrane</keyword>
<keyword id="KW-1003">Cell membrane</keyword>
<keyword id="KW-0342">GTP-binding</keyword>
<keyword id="KW-0378">Hydrolase</keyword>
<keyword id="KW-0472">Membrane</keyword>
<keyword id="KW-0547">Nucleotide-binding</keyword>
<keyword id="KW-0648">Protein biosynthesis</keyword>
<comment type="function">
    <text evidence="1">Required for accurate and efficient protein synthesis under certain stress conditions. May act as a fidelity factor of the translation reaction, by catalyzing a one-codon backward translocation of tRNAs on improperly translocated ribosomes. Back-translocation proceeds from a post-translocation (POST) complex to a pre-translocation (PRE) complex, thus giving elongation factor G a second chance to translocate the tRNAs correctly. Binds to ribosomes in a GTP-dependent manner.</text>
</comment>
<comment type="catalytic activity">
    <reaction evidence="1">
        <text>GTP + H2O = GDP + phosphate + H(+)</text>
        <dbReference type="Rhea" id="RHEA:19669"/>
        <dbReference type="ChEBI" id="CHEBI:15377"/>
        <dbReference type="ChEBI" id="CHEBI:15378"/>
        <dbReference type="ChEBI" id="CHEBI:37565"/>
        <dbReference type="ChEBI" id="CHEBI:43474"/>
        <dbReference type="ChEBI" id="CHEBI:58189"/>
        <dbReference type="EC" id="3.6.5.n1"/>
    </reaction>
</comment>
<comment type="subcellular location">
    <subcellularLocation>
        <location evidence="1">Cell inner membrane</location>
        <topology evidence="1">Peripheral membrane protein</topology>
        <orientation evidence="1">Cytoplasmic side</orientation>
    </subcellularLocation>
</comment>
<comment type="similarity">
    <text evidence="1">Belongs to the TRAFAC class translation factor GTPase superfamily. Classic translation factor GTPase family. LepA subfamily.</text>
</comment>
<name>LEPA_BORGP</name>
<dbReference type="EC" id="3.6.5.n1" evidence="1"/>
<dbReference type="EMBL" id="CP000013">
    <property type="protein sequence ID" value="AAU06947.1"/>
    <property type="molecule type" value="Genomic_DNA"/>
</dbReference>
<dbReference type="SMR" id="Q662S4"/>
<dbReference type="KEGG" id="bga:BG0089"/>
<dbReference type="eggNOG" id="COG0481">
    <property type="taxonomic scope" value="Bacteria"/>
</dbReference>
<dbReference type="HOGENOM" id="CLU_009995_3_3_12"/>
<dbReference type="OrthoDB" id="9804431at2"/>
<dbReference type="Proteomes" id="UP000002276">
    <property type="component" value="Chromosome"/>
</dbReference>
<dbReference type="GO" id="GO:0005886">
    <property type="term" value="C:plasma membrane"/>
    <property type="evidence" value="ECO:0007669"/>
    <property type="project" value="UniProtKB-SubCell"/>
</dbReference>
<dbReference type="GO" id="GO:0005525">
    <property type="term" value="F:GTP binding"/>
    <property type="evidence" value="ECO:0007669"/>
    <property type="project" value="UniProtKB-UniRule"/>
</dbReference>
<dbReference type="GO" id="GO:0003924">
    <property type="term" value="F:GTPase activity"/>
    <property type="evidence" value="ECO:0007669"/>
    <property type="project" value="UniProtKB-UniRule"/>
</dbReference>
<dbReference type="GO" id="GO:0043022">
    <property type="term" value="F:ribosome binding"/>
    <property type="evidence" value="ECO:0007669"/>
    <property type="project" value="UniProtKB-UniRule"/>
</dbReference>
<dbReference type="GO" id="GO:0003746">
    <property type="term" value="F:translation elongation factor activity"/>
    <property type="evidence" value="ECO:0007669"/>
    <property type="project" value="UniProtKB-UniRule"/>
</dbReference>
<dbReference type="GO" id="GO:0045727">
    <property type="term" value="P:positive regulation of translation"/>
    <property type="evidence" value="ECO:0007669"/>
    <property type="project" value="UniProtKB-UniRule"/>
</dbReference>
<dbReference type="CDD" id="cd03699">
    <property type="entry name" value="EF4_II"/>
    <property type="match status" value="1"/>
</dbReference>
<dbReference type="CDD" id="cd16260">
    <property type="entry name" value="EF4_III"/>
    <property type="match status" value="1"/>
</dbReference>
<dbReference type="CDD" id="cd01890">
    <property type="entry name" value="LepA"/>
    <property type="match status" value="1"/>
</dbReference>
<dbReference type="CDD" id="cd03709">
    <property type="entry name" value="lepA_C"/>
    <property type="match status" value="1"/>
</dbReference>
<dbReference type="FunFam" id="3.40.50.300:FF:000078">
    <property type="entry name" value="Elongation factor 4"/>
    <property type="match status" value="1"/>
</dbReference>
<dbReference type="FunFam" id="2.40.30.10:FF:000015">
    <property type="entry name" value="Translation factor GUF1, mitochondrial"/>
    <property type="match status" value="1"/>
</dbReference>
<dbReference type="FunFam" id="3.30.70.240:FF:000007">
    <property type="entry name" value="Translation factor GUF1, mitochondrial"/>
    <property type="match status" value="1"/>
</dbReference>
<dbReference type="FunFam" id="3.30.70.2570:FF:000001">
    <property type="entry name" value="Translation factor GUF1, mitochondrial"/>
    <property type="match status" value="1"/>
</dbReference>
<dbReference type="FunFam" id="3.30.70.870:FF:000004">
    <property type="entry name" value="Translation factor GUF1, mitochondrial"/>
    <property type="match status" value="1"/>
</dbReference>
<dbReference type="Gene3D" id="3.30.70.240">
    <property type="match status" value="1"/>
</dbReference>
<dbReference type="Gene3D" id="3.30.70.2570">
    <property type="entry name" value="Elongation factor 4, C-terminal domain"/>
    <property type="match status" value="1"/>
</dbReference>
<dbReference type="Gene3D" id="3.30.70.870">
    <property type="entry name" value="Elongation Factor G (Translational Gtpase), domain 3"/>
    <property type="match status" value="1"/>
</dbReference>
<dbReference type="Gene3D" id="3.40.50.300">
    <property type="entry name" value="P-loop containing nucleotide triphosphate hydrolases"/>
    <property type="match status" value="1"/>
</dbReference>
<dbReference type="Gene3D" id="2.40.30.10">
    <property type="entry name" value="Translation factors"/>
    <property type="match status" value="1"/>
</dbReference>
<dbReference type="HAMAP" id="MF_00071">
    <property type="entry name" value="LepA"/>
    <property type="match status" value="1"/>
</dbReference>
<dbReference type="InterPro" id="IPR006297">
    <property type="entry name" value="EF-4"/>
</dbReference>
<dbReference type="InterPro" id="IPR041095">
    <property type="entry name" value="EFG_II"/>
</dbReference>
<dbReference type="InterPro" id="IPR035647">
    <property type="entry name" value="EFG_III/V"/>
</dbReference>
<dbReference type="InterPro" id="IPR000640">
    <property type="entry name" value="EFG_V-like"/>
</dbReference>
<dbReference type="InterPro" id="IPR004161">
    <property type="entry name" value="EFTu-like_2"/>
</dbReference>
<dbReference type="InterPro" id="IPR031157">
    <property type="entry name" value="G_TR_CS"/>
</dbReference>
<dbReference type="InterPro" id="IPR038363">
    <property type="entry name" value="LepA_C_sf"/>
</dbReference>
<dbReference type="InterPro" id="IPR013842">
    <property type="entry name" value="LepA_CTD"/>
</dbReference>
<dbReference type="InterPro" id="IPR035654">
    <property type="entry name" value="LepA_IV"/>
</dbReference>
<dbReference type="InterPro" id="IPR027417">
    <property type="entry name" value="P-loop_NTPase"/>
</dbReference>
<dbReference type="InterPro" id="IPR005225">
    <property type="entry name" value="Small_GTP-bd"/>
</dbReference>
<dbReference type="InterPro" id="IPR000795">
    <property type="entry name" value="T_Tr_GTP-bd_dom"/>
</dbReference>
<dbReference type="NCBIfam" id="TIGR01393">
    <property type="entry name" value="lepA"/>
    <property type="match status" value="1"/>
</dbReference>
<dbReference type="NCBIfam" id="TIGR00231">
    <property type="entry name" value="small_GTP"/>
    <property type="match status" value="1"/>
</dbReference>
<dbReference type="PANTHER" id="PTHR43512:SF4">
    <property type="entry name" value="TRANSLATION FACTOR GUF1 HOMOLOG, CHLOROPLASTIC"/>
    <property type="match status" value="1"/>
</dbReference>
<dbReference type="PANTHER" id="PTHR43512">
    <property type="entry name" value="TRANSLATION FACTOR GUF1-RELATED"/>
    <property type="match status" value="1"/>
</dbReference>
<dbReference type="Pfam" id="PF00679">
    <property type="entry name" value="EFG_C"/>
    <property type="match status" value="1"/>
</dbReference>
<dbReference type="Pfam" id="PF14492">
    <property type="entry name" value="EFG_III"/>
    <property type="match status" value="1"/>
</dbReference>
<dbReference type="Pfam" id="PF00009">
    <property type="entry name" value="GTP_EFTU"/>
    <property type="match status" value="1"/>
</dbReference>
<dbReference type="Pfam" id="PF03144">
    <property type="entry name" value="GTP_EFTU_D2"/>
    <property type="match status" value="1"/>
</dbReference>
<dbReference type="Pfam" id="PF06421">
    <property type="entry name" value="LepA_C"/>
    <property type="match status" value="1"/>
</dbReference>
<dbReference type="PRINTS" id="PR00315">
    <property type="entry name" value="ELONGATNFCT"/>
</dbReference>
<dbReference type="SUPFAM" id="SSF54980">
    <property type="entry name" value="EF-G C-terminal domain-like"/>
    <property type="match status" value="2"/>
</dbReference>
<dbReference type="SUPFAM" id="SSF52540">
    <property type="entry name" value="P-loop containing nucleoside triphosphate hydrolases"/>
    <property type="match status" value="1"/>
</dbReference>
<dbReference type="PROSITE" id="PS00301">
    <property type="entry name" value="G_TR_1"/>
    <property type="match status" value="1"/>
</dbReference>
<dbReference type="PROSITE" id="PS51722">
    <property type="entry name" value="G_TR_2"/>
    <property type="match status" value="1"/>
</dbReference>
<gene>
    <name evidence="1" type="primary">lepA</name>
    <name type="ordered locus">BG0089</name>
</gene>
<evidence type="ECO:0000255" key="1">
    <source>
        <dbReference type="HAMAP-Rule" id="MF_00071"/>
    </source>
</evidence>
<protein>
    <recommendedName>
        <fullName evidence="1">Elongation factor 4</fullName>
        <shortName evidence="1">EF-4</shortName>
        <ecNumber evidence="1">3.6.5.n1</ecNumber>
    </recommendedName>
    <alternativeName>
        <fullName evidence="1">Ribosomal back-translocase LepA</fullName>
    </alternativeName>
</protein>
<organism>
    <name type="scientific">Borrelia garinii subsp. bavariensis (strain ATCC BAA-2496 / DSM 23469 / PBi)</name>
    <name type="common">Borreliella bavariensis</name>
    <dbReference type="NCBI Taxonomy" id="290434"/>
    <lineage>
        <taxon>Bacteria</taxon>
        <taxon>Pseudomonadati</taxon>
        <taxon>Spirochaetota</taxon>
        <taxon>Spirochaetia</taxon>
        <taxon>Spirochaetales</taxon>
        <taxon>Borreliaceae</taxon>
        <taxon>Borreliella</taxon>
    </lineage>
</organism>
<sequence length="601" mass="67708">MSISIRKKNFCIIAHIDHGKSTLADRFIQKAKIISDRDFKSQMLDSMEIERERGITIKSQVVTITYKSNDGDCYELNFVDTPGHVDFSYEVSRAISSCEGALLLIDASQGIQAQTVSNFYMAFEHDLEIIPVINKIDLPNANIDFVKKQIKNDLGLNEEIAISISAKNGIGIDDLLEAICKHVPSPRGSIKDPLRALIFDSHYDSYRGVVVHFRIFEGQIKTGDKIRLMHTNSEHLIEEIGVFKISLERKDRLEAGDVGYFIAGIKNISDVKIGDTVTLCDCPALSPLEGFKEVKPVVFSSVYPVDANQYDDLLKAMDRLKLNDASLTFEKDSSSALGHGFKCGFLGLLHLEVIQERIEREFDLNVILTSPSVRYKIIPKKGESYFIESPEQFHGNEAIEGVLEPYIRANIIVPTEFLGNIMSVCLLKRGVQTSLIYLDTKRVELIYKMPLSEILFDFYDKIKSVSRGYASFDYELLDYEYTDLVRLDILVNGDRVDALSQLVFKDSAKTKAIGICKKLKDEIARQQFKIAIQGAIGSNVIARETISPVRKDVTAKCYGGDITRKRKLLEKQKEGKKRMKMVGNVEIPQRAFLAVLKSNDN</sequence>
<feature type="chain" id="PRO_0000176240" description="Elongation factor 4">
    <location>
        <begin position="1"/>
        <end position="601"/>
    </location>
</feature>
<feature type="domain" description="tr-type G">
    <location>
        <begin position="5"/>
        <end position="187"/>
    </location>
</feature>
<feature type="binding site" evidence="1">
    <location>
        <begin position="17"/>
        <end position="22"/>
    </location>
    <ligand>
        <name>GTP</name>
        <dbReference type="ChEBI" id="CHEBI:37565"/>
    </ligand>
</feature>
<feature type="binding site" evidence="1">
    <location>
        <begin position="134"/>
        <end position="137"/>
    </location>
    <ligand>
        <name>GTP</name>
        <dbReference type="ChEBI" id="CHEBI:37565"/>
    </ligand>
</feature>
<accession>Q662S4</accession>
<proteinExistence type="inferred from homology"/>
<reference key="1">
    <citation type="journal article" date="2004" name="Nucleic Acids Res.">
        <title>Comparative analysis of the Borrelia garinii genome.</title>
        <authorList>
            <person name="Gloeckner G."/>
            <person name="Lehmann R."/>
            <person name="Romualdi A."/>
            <person name="Pradella S."/>
            <person name="Schulte-Spechtel U."/>
            <person name="Schilhabel M."/>
            <person name="Wilske B."/>
            <person name="Suehnel J."/>
            <person name="Platzer M."/>
        </authorList>
    </citation>
    <scope>NUCLEOTIDE SEQUENCE [LARGE SCALE GENOMIC DNA]</scope>
    <source>
        <strain>ATCC BAA-2496 / DSM 23469 / PBi</strain>
    </source>
</reference>